<protein>
    <recommendedName>
        <fullName evidence="1">tRNA-cytidine(32) 2-sulfurtransferase</fullName>
        <ecNumber evidence="1">2.8.1.-</ecNumber>
    </recommendedName>
    <alternativeName>
        <fullName evidence="1">Two-thiocytidine biosynthesis protein A</fullName>
    </alternativeName>
    <alternativeName>
        <fullName evidence="1">tRNA 2-thiocytidine biosynthesis protein TtcA</fullName>
    </alternativeName>
</protein>
<comment type="function">
    <text evidence="1">Catalyzes the ATP-dependent 2-thiolation of cytidine in position 32 of tRNA, to form 2-thiocytidine (s(2)C32). The sulfur atoms are provided by the cysteine/cysteine desulfurase (IscS) system.</text>
</comment>
<comment type="catalytic activity">
    <reaction evidence="1">
        <text>cytidine(32) in tRNA + S-sulfanyl-L-cysteinyl-[cysteine desulfurase] + AH2 + ATP = 2-thiocytidine(32) in tRNA + L-cysteinyl-[cysteine desulfurase] + A + AMP + diphosphate + H(+)</text>
        <dbReference type="Rhea" id="RHEA:57048"/>
        <dbReference type="Rhea" id="RHEA-COMP:10288"/>
        <dbReference type="Rhea" id="RHEA-COMP:12157"/>
        <dbReference type="Rhea" id="RHEA-COMP:12158"/>
        <dbReference type="Rhea" id="RHEA-COMP:14821"/>
        <dbReference type="ChEBI" id="CHEBI:13193"/>
        <dbReference type="ChEBI" id="CHEBI:15378"/>
        <dbReference type="ChEBI" id="CHEBI:17499"/>
        <dbReference type="ChEBI" id="CHEBI:29950"/>
        <dbReference type="ChEBI" id="CHEBI:30616"/>
        <dbReference type="ChEBI" id="CHEBI:33019"/>
        <dbReference type="ChEBI" id="CHEBI:61963"/>
        <dbReference type="ChEBI" id="CHEBI:82748"/>
        <dbReference type="ChEBI" id="CHEBI:141453"/>
        <dbReference type="ChEBI" id="CHEBI:456215"/>
    </reaction>
    <physiologicalReaction direction="left-to-right" evidence="1">
        <dbReference type="Rhea" id="RHEA:57049"/>
    </physiologicalReaction>
</comment>
<comment type="cofactor">
    <cofactor evidence="1">
        <name>Mg(2+)</name>
        <dbReference type="ChEBI" id="CHEBI:18420"/>
    </cofactor>
</comment>
<comment type="cofactor">
    <cofactor evidence="1">
        <name>[4Fe-4S] cluster</name>
        <dbReference type="ChEBI" id="CHEBI:49883"/>
    </cofactor>
    <text evidence="1">Binds 1 [4Fe-4S] cluster per subunit. The cluster is chelated by three Cys residues, the fourth Fe has a free coordination site that may bind a sulfur atom transferred from the persulfide of IscS.</text>
</comment>
<comment type="pathway">
    <text evidence="1">tRNA modification.</text>
</comment>
<comment type="subunit">
    <text evidence="1">Homodimer.</text>
</comment>
<comment type="subcellular location">
    <subcellularLocation>
        <location evidence="1">Cytoplasm</location>
    </subcellularLocation>
</comment>
<comment type="miscellaneous">
    <text evidence="1">The thiolation reaction likely consists of two steps: a first activation step by ATP to form an adenylated intermediate of the target base of tRNA, and a second nucleophilic substitution step of the sulfur (S) atom supplied by the hydrosulfide attached to the Fe-S cluster.</text>
</comment>
<comment type="similarity">
    <text evidence="1">Belongs to the TtcA family.</text>
</comment>
<comment type="sequence caution" evidence="2">
    <conflict type="erroneous initiation">
        <sequence resource="EMBL-CDS" id="ABI56296"/>
    </conflict>
    <text>Truncated N-terminus.</text>
</comment>
<feature type="chain" id="PRO_0000348658" description="tRNA-cytidine(32) 2-sulfurtransferase">
    <location>
        <begin position="1"/>
        <end position="314"/>
    </location>
</feature>
<feature type="short sequence motif" description="PP-loop motif" evidence="1">
    <location>
        <begin position="57"/>
        <end position="62"/>
    </location>
</feature>
<feature type="binding site" evidence="1">
    <location>
        <position position="132"/>
    </location>
    <ligand>
        <name>[4Fe-4S] cluster</name>
        <dbReference type="ChEBI" id="CHEBI:49883"/>
    </ligand>
</feature>
<feature type="binding site" evidence="1">
    <location>
        <position position="135"/>
    </location>
    <ligand>
        <name>[4Fe-4S] cluster</name>
        <dbReference type="ChEBI" id="CHEBI:49883"/>
    </ligand>
</feature>
<feature type="binding site" evidence="1">
    <location>
        <position position="223"/>
    </location>
    <ligand>
        <name>[4Fe-4S] cluster</name>
        <dbReference type="ChEBI" id="CHEBI:49883"/>
    </ligand>
</feature>
<name>TTCA_ALKEH</name>
<organism>
    <name type="scientific">Alkalilimnicola ehrlichii (strain ATCC BAA-1101 / DSM 17681 / MLHE-1)</name>
    <dbReference type="NCBI Taxonomy" id="187272"/>
    <lineage>
        <taxon>Bacteria</taxon>
        <taxon>Pseudomonadati</taxon>
        <taxon>Pseudomonadota</taxon>
        <taxon>Gammaproteobacteria</taxon>
        <taxon>Chromatiales</taxon>
        <taxon>Ectothiorhodospiraceae</taxon>
        <taxon>Alkalilimnicola</taxon>
    </lineage>
</organism>
<accession>Q0AA41</accession>
<evidence type="ECO:0000255" key="1">
    <source>
        <dbReference type="HAMAP-Rule" id="MF_01850"/>
    </source>
</evidence>
<evidence type="ECO:0000305" key="2"/>
<gene>
    <name evidence="1" type="primary">ttcA</name>
    <name type="ordered locus">Mlg_0942</name>
</gene>
<reference key="1">
    <citation type="submission" date="2006-08" db="EMBL/GenBank/DDBJ databases">
        <title>Complete sequence of Alkalilimnicola ehrilichei MLHE-1.</title>
        <authorList>
            <person name="Copeland A."/>
            <person name="Lucas S."/>
            <person name="Lapidus A."/>
            <person name="Barry K."/>
            <person name="Detter J.C."/>
            <person name="Glavina del Rio T."/>
            <person name="Hammon N."/>
            <person name="Israni S."/>
            <person name="Dalin E."/>
            <person name="Tice H."/>
            <person name="Pitluck S."/>
            <person name="Sims D."/>
            <person name="Brettin T."/>
            <person name="Bruce D."/>
            <person name="Han C."/>
            <person name="Tapia R."/>
            <person name="Gilna P."/>
            <person name="Schmutz J."/>
            <person name="Larimer F."/>
            <person name="Land M."/>
            <person name="Hauser L."/>
            <person name="Kyrpides N."/>
            <person name="Mikhailova N."/>
            <person name="Oremland R.S."/>
            <person name="Hoeft S.E."/>
            <person name="Switzer-Blum J."/>
            <person name="Kulp T."/>
            <person name="King G."/>
            <person name="Tabita R."/>
            <person name="Witte B."/>
            <person name="Santini J.M."/>
            <person name="Basu P."/>
            <person name="Hollibaugh J.T."/>
            <person name="Xie G."/>
            <person name="Stolz J.F."/>
            <person name="Richardson P."/>
        </authorList>
    </citation>
    <scope>NUCLEOTIDE SEQUENCE [LARGE SCALE GENOMIC DNA]</scope>
    <source>
        <strain>ATCC BAA-1101 / DSM 17681 / MLHE-1</strain>
    </source>
</reference>
<proteinExistence type="inferred from homology"/>
<sequence>MMGSAQTLATRHAPNPRGLVMGMGLKTLQKRLSHLTGNAIRDYRMIEEGDRVMVCLSGGKDSYALLDVLLRLQKRAPVRFELVAVNLDQKQPGFPEHVLPEYLASLGVPYRILEADTYSTVERVIPEGKTKCSLCSRLRRGLLYGAAEEMGCSKIALGHHRDDILETFFLNLFYGGRLAAMPPKLRSNNGRHVVIRPLAYVPEPYLERYAERMAFPIIPCTLCGSQPDLKRQMIKAMLREWGEIEPRRLANIFSALQNVQPSHLADKELYDFINLVGSVQPGEDPVSALETPHGDGFPAAEVLSGVQRHDPQSA</sequence>
<dbReference type="EC" id="2.8.1.-" evidence="1"/>
<dbReference type="EMBL" id="CP000453">
    <property type="protein sequence ID" value="ABI56296.1"/>
    <property type="status" value="ALT_INIT"/>
    <property type="molecule type" value="Genomic_DNA"/>
</dbReference>
<dbReference type="RefSeq" id="WP_011628691.1">
    <property type="nucleotide sequence ID" value="NC_008340.1"/>
</dbReference>
<dbReference type="SMR" id="Q0AA41"/>
<dbReference type="KEGG" id="aeh:Mlg_0942"/>
<dbReference type="eggNOG" id="COG0037">
    <property type="taxonomic scope" value="Bacteria"/>
</dbReference>
<dbReference type="HOGENOM" id="CLU_026481_0_0_6"/>
<dbReference type="Proteomes" id="UP000001962">
    <property type="component" value="Chromosome"/>
</dbReference>
<dbReference type="GO" id="GO:0005737">
    <property type="term" value="C:cytoplasm"/>
    <property type="evidence" value="ECO:0007669"/>
    <property type="project" value="UniProtKB-SubCell"/>
</dbReference>
<dbReference type="GO" id="GO:0051539">
    <property type="term" value="F:4 iron, 4 sulfur cluster binding"/>
    <property type="evidence" value="ECO:0007669"/>
    <property type="project" value="UniProtKB-UniRule"/>
</dbReference>
<dbReference type="GO" id="GO:0005524">
    <property type="term" value="F:ATP binding"/>
    <property type="evidence" value="ECO:0007669"/>
    <property type="project" value="UniProtKB-UniRule"/>
</dbReference>
<dbReference type="GO" id="GO:0000287">
    <property type="term" value="F:magnesium ion binding"/>
    <property type="evidence" value="ECO:0007669"/>
    <property type="project" value="UniProtKB-UniRule"/>
</dbReference>
<dbReference type="GO" id="GO:0016783">
    <property type="term" value="F:sulfurtransferase activity"/>
    <property type="evidence" value="ECO:0007669"/>
    <property type="project" value="UniProtKB-UniRule"/>
</dbReference>
<dbReference type="GO" id="GO:0000049">
    <property type="term" value="F:tRNA binding"/>
    <property type="evidence" value="ECO:0007669"/>
    <property type="project" value="UniProtKB-KW"/>
</dbReference>
<dbReference type="GO" id="GO:0034227">
    <property type="term" value="P:tRNA thio-modification"/>
    <property type="evidence" value="ECO:0007669"/>
    <property type="project" value="UniProtKB-UniRule"/>
</dbReference>
<dbReference type="CDD" id="cd24138">
    <property type="entry name" value="TtcA-like"/>
    <property type="match status" value="1"/>
</dbReference>
<dbReference type="Gene3D" id="3.40.50.620">
    <property type="entry name" value="HUPs"/>
    <property type="match status" value="1"/>
</dbReference>
<dbReference type="HAMAP" id="MF_01850">
    <property type="entry name" value="TtcA"/>
    <property type="match status" value="1"/>
</dbReference>
<dbReference type="InterPro" id="IPR014729">
    <property type="entry name" value="Rossmann-like_a/b/a_fold"/>
</dbReference>
<dbReference type="InterPro" id="IPR011063">
    <property type="entry name" value="TilS/TtcA_N"/>
</dbReference>
<dbReference type="InterPro" id="IPR012089">
    <property type="entry name" value="tRNA_Cyd_32_2_STrfase"/>
</dbReference>
<dbReference type="NCBIfam" id="NF007972">
    <property type="entry name" value="PRK10696.1"/>
    <property type="match status" value="1"/>
</dbReference>
<dbReference type="PANTHER" id="PTHR43686:SF1">
    <property type="entry name" value="AMINOTRAN_5 DOMAIN-CONTAINING PROTEIN"/>
    <property type="match status" value="1"/>
</dbReference>
<dbReference type="PANTHER" id="PTHR43686">
    <property type="entry name" value="SULFURTRANSFERASE-RELATED"/>
    <property type="match status" value="1"/>
</dbReference>
<dbReference type="Pfam" id="PF01171">
    <property type="entry name" value="ATP_bind_3"/>
    <property type="match status" value="1"/>
</dbReference>
<dbReference type="SUPFAM" id="SSF52402">
    <property type="entry name" value="Adenine nucleotide alpha hydrolases-like"/>
    <property type="match status" value="1"/>
</dbReference>
<keyword id="KW-0004">4Fe-4S</keyword>
<keyword id="KW-0067">ATP-binding</keyword>
<keyword id="KW-0963">Cytoplasm</keyword>
<keyword id="KW-0408">Iron</keyword>
<keyword id="KW-0411">Iron-sulfur</keyword>
<keyword id="KW-0460">Magnesium</keyword>
<keyword id="KW-0479">Metal-binding</keyword>
<keyword id="KW-0547">Nucleotide-binding</keyword>
<keyword id="KW-1185">Reference proteome</keyword>
<keyword id="KW-0694">RNA-binding</keyword>
<keyword id="KW-0808">Transferase</keyword>
<keyword id="KW-0819">tRNA processing</keyword>
<keyword id="KW-0820">tRNA-binding</keyword>